<keyword id="KW-1003">Cell membrane</keyword>
<keyword id="KW-0903">Direct protein sequencing</keyword>
<keyword id="KW-1015">Disulfide bond</keyword>
<keyword id="KW-0254">Endocytosis</keyword>
<keyword id="KW-0325">Glycoprotein</keyword>
<keyword id="KW-0472">Membrane</keyword>
<keyword id="KW-0597">Phosphoprotein</keyword>
<keyword id="KW-0675">Receptor</keyword>
<keyword id="KW-1185">Reference proteome</keyword>
<keyword id="KW-0964">Secreted</keyword>
<keyword id="KW-0732">Signal</keyword>
<keyword id="KW-0812">Transmembrane</keyword>
<keyword id="KW-1133">Transmembrane helix</keyword>
<keyword id="KW-0832">Ubl conjugation</keyword>
<reference key="1">
    <citation type="journal article" date="1987" name="Nature">
        <title>Growth hormone receptor and serum binding protein: purification, cloning and expression.</title>
        <authorList>
            <person name="Leung D.W."/>
            <person name="Spencer S.A."/>
            <person name="Cachianes G."/>
            <person name="Hammonds R.G."/>
            <person name="Collins C."/>
            <person name="Henzel W.J."/>
            <person name="Barnard R."/>
            <person name="Waters M.J."/>
            <person name="Wood W.I."/>
        </authorList>
    </citation>
    <scope>NUCLEOTIDE SEQUENCE [MRNA]</scope>
    <scope>PARTIAL PROTEIN SEQUENCE</scope>
</reference>
<reference key="2">
    <citation type="journal article" date="2002" name="J. Biol. Chem.">
        <title>Metalloprotease-mediated GH receptor proteolysis and GHBP shedding. Determination of extracellular domain stem region cleavage site.</title>
        <authorList>
            <person name="Wang X."/>
            <person name="He K."/>
            <person name="Gerhart M."/>
            <person name="Huang Y."/>
            <person name="Jiang J."/>
            <person name="Paxton R.J."/>
            <person name="Yang S."/>
            <person name="Lu C."/>
            <person name="Menon R.K."/>
            <person name="Black R.A."/>
            <person name="Baumann G."/>
            <person name="Frank S.J."/>
        </authorList>
    </citation>
    <scope>PROTEOLYTIC CLEAVAGE</scope>
    <scope>SUBCELLULAR LOCATION</scope>
</reference>
<reference key="3">
    <citation type="journal article" date="2004" name="Biochem. J.">
        <title>The growth hormone receptor interacts with its sheddase, the tumour necrosis factor-alpha-converting enzyme (TACE).</title>
        <authorList>
            <person name="Schantl J.A."/>
            <person name="Roza M."/>
            <person name="Van Kerkhof P."/>
            <person name="Strous G.J."/>
        </authorList>
    </citation>
    <scope>PROTEOLYTIC CLEAVAGE BY ADAM17</scope>
</reference>
<reference key="4">
    <citation type="journal article" date="1999" name="EMBO J.">
        <title>Identification of a novel ubiquitin conjugation motif, required for ligand-induced internalization of the growth hormone receptor.</title>
        <authorList>
            <person name="Govers R."/>
            <person name="ten Broeke T."/>
            <person name="van Kerkhof P."/>
            <person name="Schwartz A.L."/>
            <person name="Strous G.J."/>
        </authorList>
    </citation>
    <scope>UBIQUITINATION-DEPENDENT ENDOCYTOSIS MOTIF</scope>
    <scope>MUTAGENESIS OF ASN-338; ASP-339; ASP-340; SER-341; TRP-342; VAL-343; GLU-344; PHE-345; ILE-346; GLU-347; LEU-348; ASP-349; ILE-350; ASP-351 AND ASP-352</scope>
</reference>
<reference key="5">
    <citation type="journal article" date="2000" name="Endocrinology">
        <title>Tumor necrosis factor-alpha converting enzyme (TACE) is a growth hormone binding protein (GHBP) sheddase: the metalloprotease TACE/ADAM-17 is critical for (PMA-induced) GH receptor proteolysis and GHBP generation.</title>
        <authorList>
            <person name="Zhang Y."/>
            <person name="Jiang J."/>
            <person name="Black R.A."/>
            <person name="Baumann G."/>
            <person name="Frank S.J."/>
        </authorList>
    </citation>
    <scope>PROTEOLYTIC PROCESSING BY ADAM17</scope>
</reference>
<reference key="6">
    <citation type="journal article" date="2001" name="J. Biol. Chem.">
        <title>Growth hormone receptor ubiquitination, endocytosis, and degradation are independent of signal transduction via Janus kinase 2.</title>
        <authorList>
            <person name="Alves dos Santos C.M."/>
            <person name="ten Broeke T."/>
            <person name="Strous G.J."/>
        </authorList>
    </citation>
    <scope>UBIQUITINATION</scope>
    <scope>ENDOCYTOSIS</scope>
    <scope>DEGRADATION</scope>
</reference>
<accession>P19941</accession>
<dbReference type="EMBL" id="AF015252">
    <property type="protein sequence ID" value="AAB67613.1"/>
    <property type="molecule type" value="mRNA"/>
</dbReference>
<dbReference type="PIR" id="S08544">
    <property type="entry name" value="B28176"/>
</dbReference>
<dbReference type="RefSeq" id="NP_001076105.1">
    <property type="nucleotide sequence ID" value="NM_001082636.1"/>
</dbReference>
<dbReference type="SMR" id="P19941"/>
<dbReference type="BioGRID" id="1172345">
    <property type="interactions" value="4"/>
</dbReference>
<dbReference type="CORUM" id="P19941"/>
<dbReference type="DIP" id="DIP-313N"/>
<dbReference type="FunCoup" id="P19941">
    <property type="interactions" value="80"/>
</dbReference>
<dbReference type="IntAct" id="P19941">
    <property type="interactions" value="4"/>
</dbReference>
<dbReference type="MINT" id="P19941"/>
<dbReference type="STRING" id="9986.ENSOCUP00000033529"/>
<dbReference type="GlyCosmos" id="P19941">
    <property type="glycosylation" value="5 sites, No reported glycans"/>
</dbReference>
<dbReference type="iPTMnet" id="P19941"/>
<dbReference type="PaxDb" id="9986-ENSOCUP00000007343"/>
<dbReference type="GeneID" id="100009325"/>
<dbReference type="KEGG" id="ocu:100009325"/>
<dbReference type="CTD" id="2690"/>
<dbReference type="eggNOG" id="KOG3555">
    <property type="taxonomic scope" value="Eukaryota"/>
</dbReference>
<dbReference type="InParanoid" id="P19941"/>
<dbReference type="OrthoDB" id="9890215at2759"/>
<dbReference type="Proteomes" id="UP000001811">
    <property type="component" value="Unplaced"/>
</dbReference>
<dbReference type="GO" id="GO:0031904">
    <property type="term" value="C:endosome lumen"/>
    <property type="evidence" value="ECO:0000304"/>
    <property type="project" value="Reactome"/>
</dbReference>
<dbReference type="GO" id="GO:0009897">
    <property type="term" value="C:external side of plasma membrane"/>
    <property type="evidence" value="ECO:0007669"/>
    <property type="project" value="TreeGrafter"/>
</dbReference>
<dbReference type="GO" id="GO:0005615">
    <property type="term" value="C:extracellular space"/>
    <property type="evidence" value="ECO:0000314"/>
    <property type="project" value="BHF-UCL"/>
</dbReference>
<dbReference type="GO" id="GO:0016020">
    <property type="term" value="C:membrane"/>
    <property type="evidence" value="ECO:0000314"/>
    <property type="project" value="BHF-UCL"/>
</dbReference>
<dbReference type="GO" id="GO:0005886">
    <property type="term" value="C:plasma membrane"/>
    <property type="evidence" value="ECO:0000304"/>
    <property type="project" value="Reactome"/>
</dbReference>
<dbReference type="GO" id="GO:0004896">
    <property type="term" value="F:cytokine receptor activity"/>
    <property type="evidence" value="ECO:0007669"/>
    <property type="project" value="InterPro"/>
</dbReference>
<dbReference type="GO" id="GO:0017046">
    <property type="term" value="F:peptide hormone binding"/>
    <property type="evidence" value="ECO:0000353"/>
    <property type="project" value="BHF-UCL"/>
</dbReference>
<dbReference type="GO" id="GO:0070064">
    <property type="term" value="F:proline-rich region binding"/>
    <property type="evidence" value="ECO:0000353"/>
    <property type="project" value="BHF-UCL"/>
</dbReference>
<dbReference type="GO" id="GO:0006897">
    <property type="term" value="P:endocytosis"/>
    <property type="evidence" value="ECO:0007669"/>
    <property type="project" value="UniProtKB-KW"/>
</dbReference>
<dbReference type="GO" id="GO:0060397">
    <property type="term" value="P:growth hormone receptor signaling pathway via JAK-STAT"/>
    <property type="evidence" value="ECO:0000314"/>
    <property type="project" value="BHF-UCL"/>
</dbReference>
<dbReference type="CDD" id="cd00063">
    <property type="entry name" value="FN3"/>
    <property type="match status" value="1"/>
</dbReference>
<dbReference type="FunFam" id="2.60.40.10:FF:000269">
    <property type="entry name" value="Growth hormone receptor"/>
    <property type="match status" value="1"/>
</dbReference>
<dbReference type="FunFam" id="2.60.40.10:FF:000318">
    <property type="entry name" value="Growth hormone receptor"/>
    <property type="match status" value="1"/>
</dbReference>
<dbReference type="Gene3D" id="2.60.40.10">
    <property type="entry name" value="Immunoglobulins"/>
    <property type="match status" value="2"/>
</dbReference>
<dbReference type="InterPro" id="IPR003961">
    <property type="entry name" value="FN3_dom"/>
</dbReference>
<dbReference type="InterPro" id="IPR036116">
    <property type="entry name" value="FN3_sf"/>
</dbReference>
<dbReference type="InterPro" id="IPR025871">
    <property type="entry name" value="GHBP"/>
</dbReference>
<dbReference type="InterPro" id="IPR015152">
    <property type="entry name" value="Growth/epo_recpt_lig-bind"/>
</dbReference>
<dbReference type="InterPro" id="IPR013783">
    <property type="entry name" value="Ig-like_fold"/>
</dbReference>
<dbReference type="InterPro" id="IPR003528">
    <property type="entry name" value="Long_hematopoietin_rcpt_CS"/>
</dbReference>
<dbReference type="PANTHER" id="PTHR23037">
    <property type="entry name" value="CYTOKINE RECEPTOR"/>
    <property type="match status" value="1"/>
</dbReference>
<dbReference type="PANTHER" id="PTHR23037:SF46">
    <property type="entry name" value="INTERLEUKIN 5 RECEPTOR SUBUNIT ALPHA"/>
    <property type="match status" value="1"/>
</dbReference>
<dbReference type="Pfam" id="PF09067">
    <property type="entry name" value="EpoR_lig-bind"/>
    <property type="match status" value="1"/>
</dbReference>
<dbReference type="Pfam" id="PF00041">
    <property type="entry name" value="fn3"/>
    <property type="match status" value="1"/>
</dbReference>
<dbReference type="Pfam" id="PF12772">
    <property type="entry name" value="GHBP"/>
    <property type="match status" value="1"/>
</dbReference>
<dbReference type="SMART" id="SM00060">
    <property type="entry name" value="FN3"/>
    <property type="match status" value="1"/>
</dbReference>
<dbReference type="SUPFAM" id="SSF49265">
    <property type="entry name" value="Fibronectin type III"/>
    <property type="match status" value="2"/>
</dbReference>
<dbReference type="PROSITE" id="PS50853">
    <property type="entry name" value="FN3"/>
    <property type="match status" value="1"/>
</dbReference>
<dbReference type="PROSITE" id="PS01352">
    <property type="entry name" value="HEMATOPO_REC_L_F1"/>
    <property type="match status" value="1"/>
</dbReference>
<protein>
    <recommendedName>
        <fullName evidence="12">Growth hormone receptor</fullName>
        <shortName>GH receptor</shortName>
    </recommendedName>
    <alternativeName>
        <fullName>Somatotropin receptor</fullName>
    </alternativeName>
    <component>
        <recommendedName>
            <fullName evidence="12">Growth hormone-binding protein</fullName>
            <shortName>GH-binding protein</shortName>
            <shortName>GHBP</shortName>
        </recommendedName>
        <alternativeName>
            <fullName>Serum-binding protein</fullName>
        </alternativeName>
    </component>
</protein>
<gene>
    <name evidence="12" type="primary">GHR</name>
</gene>
<comment type="function">
    <text evidence="10">Receptor for pituitary gland growth hormone involved in regulating postnatal body growth (PubMed:2825030). On ligand binding, couples to, and activates the JAK2/STAT5 pathway (PubMed:2825030).</text>
</comment>
<comment type="function">
    <molecule>Growth hormone-binding protein</molecule>
    <text evidence="8 9 10">The soluble form acts as a reservoir of growth hormone in plasma and may be a modulator/inhibitor of GH signaling.</text>
</comment>
<comment type="subunit">
    <text evidence="1">On growth hormone (GH) binding, forms homodimers and binds JAK2 via a box 1-containing domain.</text>
</comment>
<comment type="interaction">
    <interactant intactId="EBI-7526279">
        <id>P19941</id>
    </interactant>
    <interactant intactId="EBI-617434">
        <id>P42230</id>
        <label>Stat5a</label>
    </interactant>
    <organismsDiffer>true</organismsDiffer>
    <experiments>3</experiments>
</comment>
<comment type="interaction">
    <interactant intactId="EBI-7526279">
        <id>P19941</id>
    </interactant>
    <interactant intactId="EBI-617454">
        <id>P42232</id>
        <label>Stat5b</label>
    </interactant>
    <organismsDiffer>true</organismsDiffer>
    <experiments>6</experiments>
</comment>
<comment type="subcellular location">
    <subcellularLocation>
        <location evidence="8">Cell membrane</location>
        <topology evidence="3">Single-pass type I membrane protein</topology>
    </subcellularLocation>
    <text evidence="7">On growth hormone binding, GHR is ubiquitinated, internalized, down-regulated and transported into a degradative or non-degradative pathway.</text>
</comment>
<comment type="subcellular location">
    <molecule>Growth hormone-binding protein</molecule>
    <subcellularLocation>
        <location evidence="8">Secreted</location>
    </subcellularLocation>
    <text evidence="8">Complexed to a substantial fraction of circulating GH.</text>
</comment>
<comment type="domain">
    <text evidence="1">The WSXWS motif appears to be necessary for proper protein folding and thereby efficient intracellular transport and cell-surface receptor binding.</text>
</comment>
<comment type="domain">
    <text evidence="2">The box 1 motif is required for JAK interaction and/or activation.</text>
</comment>
<comment type="domain">
    <text evidence="1">The extracellular domain is the ligand-binding domain representing the growth hormone-binding protein (GHBP).</text>
</comment>
<comment type="domain">
    <text evidence="7">The ubiquitination-dependent endocytosis motif (UbE) is required for recruitment of the ubiquitin conjugation system on to the receptor and for its internalization.</text>
</comment>
<comment type="PTM">
    <text evidence="6 8 9">The soluble form (GHBP) is produced by phorbol ester-promoted proteolytic cleavage at the cell surface (shedding) by ADAM17/TACE (PubMed:11108241, PubMed:12403792, PubMed:14519102). Shedding is inhibited by growth hormone (GH) binding to the receptor probably due to a conformational change in GHR rendering the receptor inaccessible to ADAM17 (PubMed:11108241, PubMed:12403792, PubMed:14519102).</text>
</comment>
<comment type="PTM">
    <text evidence="1">On GH binding, phosphorylated on tyrosine residues in the cytoplasmic domain by JAK2.</text>
</comment>
<comment type="PTM">
    <text evidence="1 7 11">Ubiquitinated by the ECS(SOCS2) complex following ligand-binding and phosphorylation by JAK2, leading to its degradation by the proteasome. Regulation by the ECS(SOCS2) complex acts as a negative feedback loop of growth hormone receptor signaling (By similarity). Ubiquitination is not sufficient for GHR internalization (PubMed:11418602, PubMed:9878047).</text>
</comment>
<comment type="similarity">
    <text evidence="13">Belongs to the type I cytokine receptor family. Type 1 subfamily.</text>
</comment>
<organism>
    <name type="scientific">Oryctolagus cuniculus</name>
    <name type="common">Rabbit</name>
    <dbReference type="NCBI Taxonomy" id="9986"/>
    <lineage>
        <taxon>Eukaryota</taxon>
        <taxon>Metazoa</taxon>
        <taxon>Chordata</taxon>
        <taxon>Craniata</taxon>
        <taxon>Vertebrata</taxon>
        <taxon>Euteleostomi</taxon>
        <taxon>Mammalia</taxon>
        <taxon>Eutheria</taxon>
        <taxon>Euarchontoglires</taxon>
        <taxon>Glires</taxon>
        <taxon>Lagomorpha</taxon>
        <taxon>Leporidae</taxon>
        <taxon>Oryctolagus</taxon>
    </lineage>
</organism>
<sequence>MDLWQLLLTVALAGSSDAFSGSEATPATLGRASESVQRVHPGLGTNSSGKPKFTKCRSPELETFSCHWTDGVHHGLKSPGSVQLFYIRRNTQEWTQEWKECPDYVSAGENSCYFNSSYTSIWIPYCIKLTNNGGMVDQKCFSVEEIVQPDPPIGLNWTLLNVSLTGIHADIQVRWEPPPNADVQKGWIVLEYELQYKEVNETQWKMMDPVLSTSVPVYSLRLDKEYEVRVRSRQRSSEKYGEFSEVLYVTLPQMSPFTCEEDFRFPWFLIIIFGIFGLTVMLFVFIFSKQQRIKMLILPPVPVPKIKGIDPDLLKEGKLEEVNTILAIQDSYKPEFYNDDSWVEFIELDIDDPDEKTEGSDTDRLLSNSHQKSLSVLAAKDDDSGRTSCYEPDILENDFNASDGCDGNSEVAQPQRLKGEADLLCLDQKNQNNSPYHDVSPAAQQPEVVLAEEDKPRPLLTGEIESTLQAAPSQLSNPNSLANIDFYAQVSDITPAGSVVLSPGQKNKAGNSQCDAHPEVVSLCQTNFIMDNAYFCEADAKKCIAVAPHVDVESRVEPSFNQEDIYITTESLTTTAERSGTAEDAPGSEMPVPDYTSIHLVQSPQGLVLNAATLPLPDKEFLSSCGYVSTDQLNKILP</sequence>
<proteinExistence type="evidence at protein level"/>
<evidence type="ECO:0000250" key="1">
    <source>
        <dbReference type="UniProtKB" id="P10912"/>
    </source>
</evidence>
<evidence type="ECO:0000250" key="2">
    <source>
        <dbReference type="UniProtKB" id="P16310"/>
    </source>
</evidence>
<evidence type="ECO:0000255" key="3"/>
<evidence type="ECO:0000255" key="4">
    <source>
        <dbReference type="PROSITE-ProRule" id="PRU00316"/>
    </source>
</evidence>
<evidence type="ECO:0000256" key="5">
    <source>
        <dbReference type="SAM" id="MobiDB-lite"/>
    </source>
</evidence>
<evidence type="ECO:0000269" key="6">
    <source>
    </source>
</evidence>
<evidence type="ECO:0000269" key="7">
    <source>
    </source>
</evidence>
<evidence type="ECO:0000269" key="8">
    <source>
    </source>
</evidence>
<evidence type="ECO:0000269" key="9">
    <source>
    </source>
</evidence>
<evidence type="ECO:0000269" key="10">
    <source>
    </source>
</evidence>
<evidence type="ECO:0000269" key="11">
    <source>
    </source>
</evidence>
<evidence type="ECO:0000303" key="12">
    <source>
    </source>
</evidence>
<evidence type="ECO:0000305" key="13"/>
<evidence type="ECO:0000305" key="14">
    <source>
    </source>
</evidence>
<evidence type="ECO:0000305" key="15">
    <source>
    </source>
</evidence>
<feature type="signal peptide" evidence="15">
    <location>
        <begin position="1"/>
        <end position="18"/>
    </location>
</feature>
<feature type="chain" id="PRO_0000010967" description="Growth hormone receptor">
    <location>
        <begin position="19"/>
        <end position="638"/>
    </location>
</feature>
<feature type="chain" id="PRO_0000010968" description="Growth hormone-binding protein" evidence="14">
    <location>
        <begin position="19"/>
        <end position="256"/>
    </location>
</feature>
<feature type="topological domain" description="Extracellular" evidence="3">
    <location>
        <begin position="19"/>
        <end position="264"/>
    </location>
</feature>
<feature type="transmembrane region" description="Helical" evidence="3">
    <location>
        <begin position="265"/>
        <end position="288"/>
    </location>
</feature>
<feature type="topological domain" description="Cytoplasmic" evidence="3">
    <location>
        <begin position="289"/>
        <end position="638"/>
    </location>
</feature>
<feature type="domain" description="Fibronectin type-III" evidence="4">
    <location>
        <begin position="151"/>
        <end position="254"/>
    </location>
</feature>
<feature type="region of interest" description="Disordered" evidence="5">
    <location>
        <begin position="30"/>
        <end position="51"/>
    </location>
</feature>
<feature type="region of interest" description="Required for ADAM17-mediated proteolysis" evidence="8">
    <location>
        <begin position="260"/>
        <end position="262"/>
    </location>
</feature>
<feature type="region of interest" description="Required for JAK2 binding" evidence="2">
    <location>
        <begin position="294"/>
        <end position="379"/>
    </location>
</feature>
<feature type="region of interest" description="Disordered" evidence="5">
    <location>
        <begin position="573"/>
        <end position="592"/>
    </location>
</feature>
<feature type="short sequence motif" description="WSXWS motif" evidence="1">
    <location>
        <begin position="240"/>
        <end position="244"/>
    </location>
</feature>
<feature type="short sequence motif" description="Box 1 motif" evidence="2">
    <location>
        <begin position="297"/>
        <end position="305"/>
    </location>
</feature>
<feature type="short sequence motif" description="UbE motif" evidence="7">
    <location>
        <begin position="340"/>
        <end position="349"/>
    </location>
</feature>
<feature type="modified residue" description="Phosphoserine" evidence="1">
    <location>
        <position position="341"/>
    </location>
</feature>
<feature type="modified residue" description="Phosphotyrosine" evidence="1">
    <location>
        <position position="487"/>
    </location>
</feature>
<feature type="modified residue" description="Phosphotyrosine" evidence="1">
    <location>
        <position position="595"/>
    </location>
</feature>
<feature type="glycosylation site" description="N-linked (GlcNAc...) asparagine" evidence="3">
    <location>
        <position position="46"/>
    </location>
</feature>
<feature type="glycosylation site" description="N-linked (GlcNAc...) asparagine" evidence="3">
    <location>
        <position position="115"/>
    </location>
</feature>
<feature type="glycosylation site" description="N-linked (GlcNAc...) asparagine" evidence="3">
    <location>
        <position position="156"/>
    </location>
</feature>
<feature type="glycosylation site" description="N-linked (GlcNAc...) asparagine" evidence="3">
    <location>
        <position position="161"/>
    </location>
</feature>
<feature type="glycosylation site" description="N-linked (GlcNAc...) asparagine" evidence="3">
    <location>
        <position position="200"/>
    </location>
</feature>
<feature type="disulfide bond" evidence="1">
    <location>
        <begin position="56"/>
        <end position="66"/>
    </location>
</feature>
<feature type="disulfide bond" evidence="1">
    <location>
        <begin position="101"/>
        <end position="112"/>
    </location>
</feature>
<feature type="disulfide bond" evidence="1">
    <location>
        <begin position="126"/>
        <end position="140"/>
    </location>
</feature>
<feature type="mutagenesis site" description="No effect on GHR-mediated GH internalization." evidence="11">
    <original>N</original>
    <variation>A</variation>
    <location>
        <position position="338"/>
    </location>
</feature>
<feature type="mutagenesis site" description="Slightly impaired GHR-mediated GH internalization." evidence="11">
    <original>D</original>
    <variation>A</variation>
    <location>
        <position position="339"/>
    </location>
</feature>
<feature type="mutagenesis site" description="Impaired GHR-mediated GH internalization." evidence="11">
    <original>D</original>
    <variation>A</variation>
    <location>
        <position position="340"/>
    </location>
</feature>
<feature type="mutagenesis site" description="Impaired GHR-mediated GH internalization." evidence="11">
    <original>S</original>
    <variation>A</variation>
    <location>
        <position position="341"/>
    </location>
</feature>
<feature type="mutagenesis site" description="Slightly impaired GHR-mediated GH internalization." evidence="11">
    <original>S</original>
    <variation>L</variation>
    <variation>T</variation>
    <location>
        <position position="341"/>
    </location>
</feature>
<feature type="mutagenesis site" description="Impaired GHR-mediated GH internalization." evidence="11">
    <original>W</original>
    <variation>A</variation>
    <location>
        <position position="342"/>
    </location>
</feature>
<feature type="mutagenesis site" description="No effect on GHR-mediated GH internalization." evidence="11">
    <original>W</original>
    <variation>L</variation>
    <location>
        <position position="342"/>
    </location>
</feature>
<feature type="mutagenesis site" description="No effect on GHR-mediated GH internalization." evidence="11">
    <original>V</original>
    <variation>A</variation>
    <location>
        <position position="343"/>
    </location>
</feature>
<feature type="mutagenesis site" description="Impaired GHR-mediated GH internalization." evidence="11">
    <original>V</original>
    <variation>G</variation>
    <location>
        <position position="343"/>
    </location>
</feature>
<feature type="mutagenesis site" description="Impaired GHR-mediated GH internalization. Greatly reduced ubiquitination." evidence="11">
    <original>E</original>
    <variation>A</variation>
    <location>
        <position position="344"/>
    </location>
</feature>
<feature type="mutagenesis site" description="No effect on GHR-mediated GH internalization." evidence="11">
    <original>E</original>
    <variation>D</variation>
    <location>
        <position position="344"/>
    </location>
</feature>
<feature type="mutagenesis site" description="Impaired GHR-mediated GH internalization. Greatly reduced ubiquitination." evidence="11">
    <original>F</original>
    <variation>A</variation>
    <location>
        <position position="345"/>
    </location>
</feature>
<feature type="mutagenesis site" description="Impaired GHR-mediated GH internalization." evidence="11">
    <original>F</original>
    <variation>L</variation>
    <variation>V</variation>
    <location>
        <position position="345"/>
    </location>
</feature>
<feature type="mutagenesis site" description="No effect on GHR-mediated GH internalization. No effect on ubiquitination." evidence="11">
    <original>F</original>
    <variation>Y</variation>
    <location>
        <position position="345"/>
    </location>
</feature>
<feature type="mutagenesis site" description="Impaired GHR-mediated GH internalization. Greatly reduced ubiquitination." evidence="11">
    <original>I</original>
    <variation>A</variation>
    <location>
        <position position="346"/>
    </location>
</feature>
<feature type="mutagenesis site" description="Slightly impaired GHR-mediated GH internalization." evidence="11">
    <original>I</original>
    <variation>F</variation>
    <location>
        <position position="346"/>
    </location>
</feature>
<feature type="mutagenesis site" description="No effect on GHR-mediated GH internalization." evidence="11">
    <original>I</original>
    <variation>L</variation>
    <location>
        <position position="346"/>
    </location>
</feature>
<feature type="mutagenesis site" description="Impaired GHR-mediated GH internalization." evidence="11">
    <original>E</original>
    <variation>A</variation>
    <variation>D</variation>
    <location>
        <position position="347"/>
    </location>
</feature>
<feature type="mutagenesis site" description="Impaired GHR-mediated GH internalization." evidence="11">
    <original>L</original>
    <variation>A</variation>
    <variation>V</variation>
    <location>
        <position position="348"/>
    </location>
</feature>
<feature type="mutagenesis site" description="Impaired GHR-mediated GH internalization. Greatly reduced ubiquitination." evidence="11">
    <original>D</original>
    <variation>A</variation>
    <location>
        <position position="349"/>
    </location>
</feature>
<feature type="mutagenesis site" description="No effect on GHR-mediated GH internalization." evidence="11">
    <original>D</original>
    <variation>E</variation>
    <location>
        <position position="349"/>
    </location>
</feature>
<feature type="mutagenesis site" description="Impaired GHR-mediated GH internalization." evidence="11">
    <original>D</original>
    <variation>N</variation>
    <location>
        <position position="349"/>
    </location>
</feature>
<feature type="mutagenesis site" description="Impaired GHR-mediated GH internalization." evidence="11">
    <original>I</original>
    <variation>A</variation>
    <location>
        <position position="350"/>
    </location>
</feature>
<feature type="mutagenesis site" description="No effect on GHR-mediated GH internalization." evidence="11">
    <original>D</original>
    <variation>A</variation>
    <location>
        <position position="351"/>
    </location>
</feature>
<feature type="mutagenesis site" description="No effect on GHR-mediated GH internalization." evidence="11">
    <original>D</original>
    <variation>A</variation>
    <location>
        <position position="352"/>
    </location>
</feature>
<name>GHR_RABIT</name>